<protein>
    <recommendedName>
        <fullName evidence="1">2-C-methyl-D-erythritol 2,4-cyclodiphosphate synthase</fullName>
        <shortName evidence="1">MECDP-synthase</shortName>
        <shortName evidence="1">MECPP-synthase</shortName>
        <shortName evidence="1">MECPS</shortName>
        <ecNumber evidence="1">4.6.1.12</ecNumber>
    </recommendedName>
</protein>
<comment type="function">
    <text evidence="1">Involved in the biosynthesis of isopentenyl diphosphate (IPP) and dimethylallyl diphosphate (DMAPP), two major building blocks of isoprenoid compounds. Catalyzes the conversion of 4-diphosphocytidyl-2-C-methyl-D-erythritol 2-phosphate (CDP-ME2P) to 2-C-methyl-D-erythritol 2,4-cyclodiphosphate (ME-CPP) with a corresponding release of cytidine 5-monophosphate (CMP).</text>
</comment>
<comment type="catalytic activity">
    <reaction evidence="1">
        <text>4-CDP-2-C-methyl-D-erythritol 2-phosphate = 2-C-methyl-D-erythritol 2,4-cyclic diphosphate + CMP</text>
        <dbReference type="Rhea" id="RHEA:23864"/>
        <dbReference type="ChEBI" id="CHEBI:57919"/>
        <dbReference type="ChEBI" id="CHEBI:58483"/>
        <dbReference type="ChEBI" id="CHEBI:60377"/>
        <dbReference type="EC" id="4.6.1.12"/>
    </reaction>
</comment>
<comment type="cofactor">
    <cofactor evidence="1">
        <name>a divalent metal cation</name>
        <dbReference type="ChEBI" id="CHEBI:60240"/>
    </cofactor>
    <text evidence="1">Binds 1 divalent metal cation per subunit.</text>
</comment>
<comment type="pathway">
    <text evidence="1">Isoprenoid biosynthesis; isopentenyl diphosphate biosynthesis via DXP pathway; isopentenyl diphosphate from 1-deoxy-D-xylulose 5-phosphate: step 4/6.</text>
</comment>
<comment type="subunit">
    <text evidence="1">Homotrimer.</text>
</comment>
<comment type="similarity">
    <text evidence="1">Belongs to the IspF family.</text>
</comment>
<accession>C1D559</accession>
<evidence type="ECO:0000255" key="1">
    <source>
        <dbReference type="HAMAP-Rule" id="MF_00107"/>
    </source>
</evidence>
<reference key="1">
    <citation type="journal article" date="2009" name="PLoS Genet.">
        <title>The complete genome and proteome of Laribacter hongkongensis reveal potential mechanisms for adaptations to different temperatures and habitats.</title>
        <authorList>
            <person name="Woo P.C.Y."/>
            <person name="Lau S.K.P."/>
            <person name="Tse H."/>
            <person name="Teng J.L.L."/>
            <person name="Curreem S.O."/>
            <person name="Tsang A.K.L."/>
            <person name="Fan R.Y.Y."/>
            <person name="Wong G.K.M."/>
            <person name="Huang Y."/>
            <person name="Loman N.J."/>
            <person name="Snyder L.A.S."/>
            <person name="Cai J.J."/>
            <person name="Huang J.-D."/>
            <person name="Mak W."/>
            <person name="Pallen M.J."/>
            <person name="Lok S."/>
            <person name="Yuen K.-Y."/>
        </authorList>
    </citation>
    <scope>NUCLEOTIDE SEQUENCE [LARGE SCALE GENOMIC DNA]</scope>
    <source>
        <strain>HLHK9</strain>
    </source>
</reference>
<organism>
    <name type="scientific">Laribacter hongkongensis (strain HLHK9)</name>
    <dbReference type="NCBI Taxonomy" id="557598"/>
    <lineage>
        <taxon>Bacteria</taxon>
        <taxon>Pseudomonadati</taxon>
        <taxon>Pseudomonadota</taxon>
        <taxon>Betaproteobacteria</taxon>
        <taxon>Neisseriales</taxon>
        <taxon>Aquaspirillaceae</taxon>
        <taxon>Laribacter</taxon>
    </lineage>
</organism>
<keyword id="KW-0414">Isoprene biosynthesis</keyword>
<keyword id="KW-0456">Lyase</keyword>
<keyword id="KW-0479">Metal-binding</keyword>
<keyword id="KW-1185">Reference proteome</keyword>
<name>ISPF_LARHH</name>
<sequence length="162" mass="17397">MNLRIGQGWDVHRLVEGRPLVLGGVTIPFDKGLDGHSDADALCHAITDALFGAAALGDIGRHFPDTDLEFKGADSRVLLREAVRRVREAGFDIVNVDSTVIAQAPRLAPYVEAMRSHLAADLGLSPDRVNVKAKTSERLGHLGRGEGIAADAVCLLQSRLQE</sequence>
<proteinExistence type="inferred from homology"/>
<feature type="chain" id="PRO_1000202882" description="2-C-methyl-D-erythritol 2,4-cyclodiphosphate synthase">
    <location>
        <begin position="1"/>
        <end position="162"/>
    </location>
</feature>
<feature type="binding site" evidence="1">
    <location>
        <begin position="10"/>
        <end position="12"/>
    </location>
    <ligand>
        <name>4-CDP-2-C-methyl-D-erythritol 2-phosphate</name>
        <dbReference type="ChEBI" id="CHEBI:57919"/>
    </ligand>
</feature>
<feature type="binding site" evidence="1">
    <location>
        <position position="10"/>
    </location>
    <ligand>
        <name>a divalent metal cation</name>
        <dbReference type="ChEBI" id="CHEBI:60240"/>
    </ligand>
</feature>
<feature type="binding site" evidence="1">
    <location>
        <position position="12"/>
    </location>
    <ligand>
        <name>a divalent metal cation</name>
        <dbReference type="ChEBI" id="CHEBI:60240"/>
    </ligand>
</feature>
<feature type="binding site" evidence="1">
    <location>
        <begin position="36"/>
        <end position="37"/>
    </location>
    <ligand>
        <name>4-CDP-2-C-methyl-D-erythritol 2-phosphate</name>
        <dbReference type="ChEBI" id="CHEBI:57919"/>
    </ligand>
</feature>
<feature type="binding site" evidence="1">
    <location>
        <position position="44"/>
    </location>
    <ligand>
        <name>a divalent metal cation</name>
        <dbReference type="ChEBI" id="CHEBI:60240"/>
    </ligand>
</feature>
<feature type="binding site" evidence="1">
    <location>
        <begin position="58"/>
        <end position="60"/>
    </location>
    <ligand>
        <name>4-CDP-2-C-methyl-D-erythritol 2-phosphate</name>
        <dbReference type="ChEBI" id="CHEBI:57919"/>
    </ligand>
</feature>
<feature type="binding site" evidence="1">
    <location>
        <begin position="63"/>
        <end position="67"/>
    </location>
    <ligand>
        <name>4-CDP-2-C-methyl-D-erythritol 2-phosphate</name>
        <dbReference type="ChEBI" id="CHEBI:57919"/>
    </ligand>
</feature>
<feature type="binding site" evidence="1">
    <location>
        <position position="144"/>
    </location>
    <ligand>
        <name>4-CDP-2-C-methyl-D-erythritol 2-phosphate</name>
        <dbReference type="ChEBI" id="CHEBI:57919"/>
    </ligand>
</feature>
<feature type="site" description="Transition state stabilizer" evidence="1">
    <location>
        <position position="36"/>
    </location>
</feature>
<feature type="site" description="Transition state stabilizer" evidence="1">
    <location>
        <position position="135"/>
    </location>
</feature>
<dbReference type="EC" id="4.6.1.12" evidence="1"/>
<dbReference type="EMBL" id="CP001154">
    <property type="protein sequence ID" value="ACO73876.1"/>
    <property type="molecule type" value="Genomic_DNA"/>
</dbReference>
<dbReference type="RefSeq" id="WP_012696368.1">
    <property type="nucleotide sequence ID" value="NC_012559.1"/>
</dbReference>
<dbReference type="SMR" id="C1D559"/>
<dbReference type="STRING" id="557598.LHK_00883"/>
<dbReference type="GeneID" id="75110206"/>
<dbReference type="KEGG" id="lhk:LHK_00883"/>
<dbReference type="eggNOG" id="COG0245">
    <property type="taxonomic scope" value="Bacteria"/>
</dbReference>
<dbReference type="HOGENOM" id="CLU_084630_2_0_4"/>
<dbReference type="UniPathway" id="UPA00056">
    <property type="reaction ID" value="UER00095"/>
</dbReference>
<dbReference type="Proteomes" id="UP000002010">
    <property type="component" value="Chromosome"/>
</dbReference>
<dbReference type="GO" id="GO:0008685">
    <property type="term" value="F:2-C-methyl-D-erythritol 2,4-cyclodiphosphate synthase activity"/>
    <property type="evidence" value="ECO:0007669"/>
    <property type="project" value="UniProtKB-UniRule"/>
</dbReference>
<dbReference type="GO" id="GO:0046872">
    <property type="term" value="F:metal ion binding"/>
    <property type="evidence" value="ECO:0007669"/>
    <property type="project" value="UniProtKB-KW"/>
</dbReference>
<dbReference type="GO" id="GO:0019288">
    <property type="term" value="P:isopentenyl diphosphate biosynthetic process, methylerythritol 4-phosphate pathway"/>
    <property type="evidence" value="ECO:0007669"/>
    <property type="project" value="UniProtKB-UniRule"/>
</dbReference>
<dbReference type="GO" id="GO:0016114">
    <property type="term" value="P:terpenoid biosynthetic process"/>
    <property type="evidence" value="ECO:0007669"/>
    <property type="project" value="InterPro"/>
</dbReference>
<dbReference type="CDD" id="cd00554">
    <property type="entry name" value="MECDP_synthase"/>
    <property type="match status" value="1"/>
</dbReference>
<dbReference type="FunFam" id="3.30.1330.50:FF:000001">
    <property type="entry name" value="2-C-methyl-D-erythritol 2,4-cyclodiphosphate synthase"/>
    <property type="match status" value="1"/>
</dbReference>
<dbReference type="Gene3D" id="3.30.1330.50">
    <property type="entry name" value="2-C-methyl-D-erythritol 2,4-cyclodiphosphate synthase"/>
    <property type="match status" value="1"/>
</dbReference>
<dbReference type="HAMAP" id="MF_00107">
    <property type="entry name" value="IspF"/>
    <property type="match status" value="1"/>
</dbReference>
<dbReference type="InterPro" id="IPR003526">
    <property type="entry name" value="MECDP_synthase"/>
</dbReference>
<dbReference type="InterPro" id="IPR020555">
    <property type="entry name" value="MECDP_synthase_CS"/>
</dbReference>
<dbReference type="InterPro" id="IPR036571">
    <property type="entry name" value="MECDP_synthase_sf"/>
</dbReference>
<dbReference type="NCBIfam" id="TIGR00151">
    <property type="entry name" value="ispF"/>
    <property type="match status" value="1"/>
</dbReference>
<dbReference type="PANTHER" id="PTHR43181">
    <property type="entry name" value="2-C-METHYL-D-ERYTHRITOL 2,4-CYCLODIPHOSPHATE SYNTHASE, CHLOROPLASTIC"/>
    <property type="match status" value="1"/>
</dbReference>
<dbReference type="PANTHER" id="PTHR43181:SF1">
    <property type="entry name" value="2-C-METHYL-D-ERYTHRITOL 2,4-CYCLODIPHOSPHATE SYNTHASE, CHLOROPLASTIC"/>
    <property type="match status" value="1"/>
</dbReference>
<dbReference type="Pfam" id="PF02542">
    <property type="entry name" value="YgbB"/>
    <property type="match status" value="1"/>
</dbReference>
<dbReference type="SUPFAM" id="SSF69765">
    <property type="entry name" value="IpsF-like"/>
    <property type="match status" value="1"/>
</dbReference>
<dbReference type="PROSITE" id="PS01350">
    <property type="entry name" value="ISPF"/>
    <property type="match status" value="1"/>
</dbReference>
<gene>
    <name evidence="1" type="primary">ispF</name>
    <name type="ordered locus">LHK_00883</name>
</gene>